<dbReference type="EMBL" id="AJ011834">
    <property type="protein sequence ID" value="CAB57454.1"/>
    <property type="molecule type" value="mRNA"/>
</dbReference>
<dbReference type="EMBL" id="AB033128">
    <property type="protein sequence ID" value="BAA93717.1"/>
    <property type="molecule type" value="mRNA"/>
</dbReference>
<dbReference type="EMBL" id="BC061243">
    <property type="protein sequence ID" value="AAH61243.1"/>
    <property type="molecule type" value="mRNA"/>
</dbReference>
<dbReference type="CCDS" id="CCDS23977.1">
    <molecule id="Q9JMB1-1"/>
</dbReference>
<dbReference type="CCDS" id="CCDS23978.1">
    <molecule id="Q9JMB1-2"/>
</dbReference>
<dbReference type="RefSeq" id="NP_035713.1">
    <molecule id="Q9JMB1-1"/>
    <property type="nucleotide sequence ID" value="NM_011583.4"/>
</dbReference>
<dbReference type="RefSeq" id="NP_954696.1">
    <molecule id="Q9JMB1-2"/>
    <property type="nucleotide sequence ID" value="NM_199226.2"/>
</dbReference>
<dbReference type="SMR" id="Q9JMB1"/>
<dbReference type="FunCoup" id="Q9JMB1">
    <property type="interactions" value="291"/>
</dbReference>
<dbReference type="IntAct" id="Q9JMB1">
    <property type="interactions" value="1"/>
</dbReference>
<dbReference type="STRING" id="10090.ENSMUSP00000020566"/>
<dbReference type="iPTMnet" id="Q9JMB1"/>
<dbReference type="PhosphoSitePlus" id="Q9JMB1"/>
<dbReference type="PaxDb" id="10090-ENSMUSP00000020566"/>
<dbReference type="ProteomicsDB" id="259379">
    <molecule id="Q9JMB1-1"/>
</dbReference>
<dbReference type="ProteomicsDB" id="259380">
    <molecule id="Q9JMB1-2"/>
</dbReference>
<dbReference type="Antibodypedia" id="22292">
    <property type="antibodies" value="44 antibodies from 11 providers"/>
</dbReference>
<dbReference type="DNASU" id="21830"/>
<dbReference type="Ensembl" id="ENSMUST00000020566.7">
    <molecule id="Q9JMB1-1"/>
    <property type="protein sequence ID" value="ENSMUSP00000020566.7"/>
    <property type="gene ID" value="ENSMUSG00000020317.15"/>
</dbReference>
<dbReference type="Ensembl" id="ENSMUST00000077433.13">
    <molecule id="Q9JMB1-2"/>
    <property type="protein sequence ID" value="ENSMUSP00000076647.7"/>
    <property type="gene ID" value="ENSMUSG00000020317.15"/>
</dbReference>
<dbReference type="GeneID" id="21830"/>
<dbReference type="KEGG" id="mmu:21830"/>
<dbReference type="UCSC" id="uc007fyz.1">
    <molecule id="Q9JMB1-1"/>
    <property type="organism name" value="mouse"/>
</dbReference>
<dbReference type="UCSC" id="uc007fza.1">
    <molecule id="Q9JMB1-2"/>
    <property type="organism name" value="mouse"/>
</dbReference>
<dbReference type="AGR" id="MGI:1338756"/>
<dbReference type="CTD" id="51298"/>
<dbReference type="MGI" id="MGI:1338756">
    <property type="gene designation" value="Spmap2"/>
</dbReference>
<dbReference type="VEuPathDB" id="HostDB:ENSMUSG00000020317"/>
<dbReference type="eggNOG" id="ENOG502SBEN">
    <property type="taxonomic scope" value="Eukaryota"/>
</dbReference>
<dbReference type="GeneTree" id="ENSGT00940000154630"/>
<dbReference type="HOGENOM" id="CLU_061711_0_0_1"/>
<dbReference type="InParanoid" id="Q9JMB1"/>
<dbReference type="OMA" id="YAWISPR"/>
<dbReference type="OrthoDB" id="25466at2759"/>
<dbReference type="PhylomeDB" id="Q9JMB1"/>
<dbReference type="TreeFam" id="TF329290"/>
<dbReference type="BioGRID-ORCS" id="21830">
    <property type="hits" value="1 hit in 77 CRISPR screens"/>
</dbReference>
<dbReference type="PRO" id="PR:Q9JMB1"/>
<dbReference type="Proteomes" id="UP000000589">
    <property type="component" value="Chromosome 10"/>
</dbReference>
<dbReference type="RNAct" id="Q9JMB1">
    <property type="molecule type" value="protein"/>
</dbReference>
<dbReference type="Bgee" id="ENSMUSG00000020317">
    <property type="expression patterns" value="Expressed in seminiferous tubule of testis and 24 other cell types or tissues"/>
</dbReference>
<dbReference type="GO" id="GO:0005737">
    <property type="term" value="C:cytoplasm"/>
    <property type="evidence" value="ECO:0000304"/>
    <property type="project" value="MGI"/>
</dbReference>
<dbReference type="GO" id="GO:0005634">
    <property type="term" value="C:nucleus"/>
    <property type="evidence" value="ECO:0007669"/>
    <property type="project" value="UniProtKB-SubCell"/>
</dbReference>
<dbReference type="GO" id="GO:0030154">
    <property type="term" value="P:cell differentiation"/>
    <property type="evidence" value="ECO:0007669"/>
    <property type="project" value="UniProtKB-KW"/>
</dbReference>
<dbReference type="GO" id="GO:0007283">
    <property type="term" value="P:spermatogenesis"/>
    <property type="evidence" value="ECO:0000315"/>
    <property type="project" value="MGI"/>
</dbReference>
<dbReference type="InterPro" id="IPR042401">
    <property type="entry name" value="SPMAP2-like"/>
</dbReference>
<dbReference type="InterPro" id="IPR006623">
    <property type="entry name" value="THEG"/>
</dbReference>
<dbReference type="PANTHER" id="PTHR15901">
    <property type="entry name" value="TESTICULAR HAPLOID EXPRESSED GENE PROTEIN"/>
    <property type="match status" value="1"/>
</dbReference>
<dbReference type="PANTHER" id="PTHR15901:SF16">
    <property type="entry name" value="TESTICULAR HAPLOID EXPRESSED GENE PROTEIN"/>
    <property type="match status" value="1"/>
</dbReference>
<dbReference type="Pfam" id="PF14912">
    <property type="entry name" value="THEG"/>
    <property type="match status" value="5"/>
</dbReference>
<dbReference type="SMART" id="SM00705">
    <property type="entry name" value="THEG"/>
    <property type="match status" value="8"/>
</dbReference>
<feature type="chain" id="PRO_0000306268" description="Sperm microtubule associated protein 2">
    <location>
        <begin position="1"/>
        <end position="375"/>
    </location>
</feature>
<feature type="repeat" description="THEG 1">
    <location>
        <begin position="110"/>
        <end position="129"/>
    </location>
</feature>
<feature type="repeat" description="THEG 2">
    <location>
        <begin position="176"/>
        <end position="195"/>
    </location>
</feature>
<feature type="repeat" description="THEG 3">
    <location>
        <begin position="214"/>
        <end position="233"/>
    </location>
</feature>
<feature type="repeat" description="THEG 4">
    <location>
        <begin position="250"/>
        <end position="269"/>
    </location>
</feature>
<feature type="repeat" description="THEG 5">
    <location>
        <begin position="282"/>
        <end position="301"/>
    </location>
</feature>
<feature type="repeat" description="THEG 6">
    <location>
        <begin position="318"/>
        <end position="337"/>
    </location>
</feature>
<feature type="repeat" description="THEG 7">
    <location>
        <begin position="352"/>
        <end position="371"/>
    </location>
</feature>
<feature type="region of interest" description="Disordered" evidence="3">
    <location>
        <begin position="1"/>
        <end position="78"/>
    </location>
</feature>
<feature type="compositionally biased region" description="Acidic residues" evidence="3">
    <location>
        <begin position="59"/>
        <end position="75"/>
    </location>
</feature>
<feature type="modified residue" description="Phosphoserine" evidence="1">
    <location>
        <position position="287"/>
    </location>
</feature>
<feature type="splice variant" id="VSP_028447" description="In isoform 2." evidence="9 12">
    <location>
        <begin position="137"/>
        <end position="160"/>
    </location>
</feature>
<feature type="sequence conflict" description="In Ref. 1; CAB57454." evidence="13" ref="1">
    <original>T</original>
    <variation>R</variation>
    <location>
        <position position="257"/>
    </location>
</feature>
<feature type="sequence conflict" description="In Ref. 1; CAB57454." evidence="13" ref="1">
    <original>L</original>
    <variation>LL</variation>
    <location>
        <position position="263"/>
    </location>
</feature>
<keyword id="KW-0025">Alternative splicing</keyword>
<keyword id="KW-0217">Developmental protein</keyword>
<keyword id="KW-0221">Differentiation</keyword>
<keyword id="KW-0539">Nucleus</keyword>
<keyword id="KW-0597">Phosphoprotein</keyword>
<keyword id="KW-1185">Reference proteome</keyword>
<keyword id="KW-0677">Repeat</keyword>
<keyword id="KW-0744">Spermatogenesis</keyword>
<name>SPMA2_MOUSE</name>
<proteinExistence type="evidence at protein level"/>
<accession>Q9JMB1</accession>
<accession>Q6P8H9</accession>
<accession>Q9QZ27</accession>
<reference key="1">
    <citation type="journal article" date="1999" name="Biol. Reprod.">
        <title>A novel testicular haploid expressed gene (THEG) involved in mouse spermatid-sertoli cell interaction.</title>
        <authorList>
            <person name="Nayernia K."/>
            <person name="von Mering M.H."/>
            <person name="Kraszucka K."/>
            <person name="Burfeind P."/>
            <person name="Wehrend A."/>
            <person name="Koehler M."/>
            <person name="Schmid M."/>
            <person name="Engel W."/>
        </authorList>
    </citation>
    <scope>NUCLEOTIDE SEQUENCE [MRNA] (ISOFORM 1)</scope>
    <scope>ALTERNATIVE SPLICING</scope>
    <scope>TISSUE SPECIFICITY</scope>
    <scope>DEVELOPMENTAL STAGE (ISOFORMS 1 AND 2)</scope>
    <source>
        <tissue>Testis</tissue>
    </source>
</reference>
<reference key="2">
    <citation type="journal article" date="2000" name="J. Biol. Chem.">
        <title>Insertional mutation of the murine kisimo locus caused a defect in spermatogenesis.</title>
        <authorList>
            <person name="Yanaka N."/>
            <person name="Kobayashi K."/>
            <person name="Wakimoto K."/>
            <person name="Yamada E."/>
            <person name="Imahie H."/>
            <person name="Imai Y."/>
            <person name="Mori C."/>
        </authorList>
    </citation>
    <scope>NUCLEOTIDE SEQUENCE [MRNA] (ISOFORMS 1 AND 2)</scope>
    <scope>ALTERNATIVE SPLICING</scope>
    <scope>TISSUE SPECIFICITY</scope>
    <scope>INTERACTION WITH CCT5</scope>
    <scope>DISRUPTION PHENOTYPE</scope>
    <source>
        <tissue>Testis</tissue>
    </source>
</reference>
<reference key="3">
    <citation type="journal article" date="2004" name="Genome Res.">
        <title>The status, quality, and expansion of the NIH full-length cDNA project: the Mammalian Gene Collection (MGC).</title>
        <authorList>
            <consortium name="The MGC Project Team"/>
        </authorList>
    </citation>
    <scope>NUCLEOTIDE SEQUENCE [LARGE SCALE MRNA] (ISOFORM 2)</scope>
    <source>
        <tissue>Testis</tissue>
    </source>
</reference>
<reference key="4">
    <citation type="journal article" date="2000" name="Cytogenet. Cell Genet.">
        <title>Alternative splicing, chromosome assignment and subcellular localization of the testicular haploid expressed gene (THEG).</title>
        <authorList>
            <person name="Mannan A."/>
            <person name="Lucke K."/>
            <person name="Dixkens C."/>
            <person name="Neesen J."/>
            <person name="Kamper M."/>
            <person name="Engel W."/>
            <person name="Burfeind P."/>
        </authorList>
    </citation>
    <scope>SUBCELLULAR LOCATION</scope>
    <scope>TISSUE SPECIFICITY</scope>
</reference>
<reference key="5">
    <citation type="journal article" date="2003" name="Biol. Reprod.">
        <title>Male mice lacking the Theg (testicular haploid expressed gene) protein undergo normal spermatogenesis and are fertile.</title>
        <authorList>
            <person name="Mannan A.U."/>
            <person name="Nayernia K."/>
            <person name="Mueller C."/>
            <person name="Burfeind P."/>
            <person name="Adham I.M."/>
            <person name="Engel W."/>
        </authorList>
    </citation>
    <scope>FUNCTION</scope>
    <scope>SUBCELLULAR LOCATION</scope>
    <scope>TISSUE SPECIFICITY</scope>
    <scope>DEVELOPMENTAL STAGE</scope>
    <scope>DISRUPTION PHENOTYPE</scope>
</reference>
<evidence type="ECO:0000250" key="1">
    <source>
        <dbReference type="UniProtKB" id="Q5XHX8"/>
    </source>
</evidence>
<evidence type="ECO:0000250" key="2">
    <source>
        <dbReference type="UniProtKB" id="Q9P2T0"/>
    </source>
</evidence>
<evidence type="ECO:0000256" key="3">
    <source>
        <dbReference type="SAM" id="MobiDB-lite"/>
    </source>
</evidence>
<evidence type="ECO:0000269" key="4">
    <source>
    </source>
</evidence>
<evidence type="ECO:0000269" key="5">
    <source>
    </source>
</evidence>
<evidence type="ECO:0000269" key="6">
    <source>
    </source>
</evidence>
<evidence type="ECO:0000269" key="7">
    <source>
    </source>
</evidence>
<evidence type="ECO:0000303" key="8">
    <source>
    </source>
</evidence>
<evidence type="ECO:0000303" key="9">
    <source>
    </source>
</evidence>
<evidence type="ECO:0000303" key="10">
    <source>
    </source>
</evidence>
<evidence type="ECO:0000303" key="11">
    <source>
    </source>
</evidence>
<evidence type="ECO:0000303" key="12">
    <source>
    </source>
</evidence>
<evidence type="ECO:0000305" key="13"/>
<organism>
    <name type="scientific">Mus musculus</name>
    <name type="common">Mouse</name>
    <dbReference type="NCBI Taxonomy" id="10090"/>
    <lineage>
        <taxon>Eukaryota</taxon>
        <taxon>Metazoa</taxon>
        <taxon>Chordata</taxon>
        <taxon>Craniata</taxon>
        <taxon>Vertebrata</taxon>
        <taxon>Euteleostomi</taxon>
        <taxon>Mammalia</taxon>
        <taxon>Eutheria</taxon>
        <taxon>Euarchontoglires</taxon>
        <taxon>Glires</taxon>
        <taxon>Rodentia</taxon>
        <taxon>Myomorpha</taxon>
        <taxon>Muroidea</taxon>
        <taxon>Muridae</taxon>
        <taxon>Murinae</taxon>
        <taxon>Mus</taxon>
        <taxon>Mus</taxon>
    </lineage>
</organism>
<protein>
    <recommendedName>
        <fullName evidence="2">Sperm microtubule associated protein 2</fullName>
    </recommendedName>
    <alternativeName>
        <fullName evidence="8 10 11">Testicular haploid expressed gene protein</fullName>
    </alternativeName>
</protein>
<comment type="function">
    <text evidence="7">May be involved (but not essential) in spermatogenesis.</text>
</comment>
<comment type="subunit">
    <text evidence="5">Interacts with CCT5.</text>
</comment>
<comment type="interaction">
    <interactant intactId="EBI-1390549">
        <id>Q9JMB1</id>
    </interactant>
    <interactant intactId="EBI-772379">
        <id>P80316</id>
        <label>Cct5</label>
    </interactant>
    <organismsDiffer>false</organismsDiffer>
    <experiments>2</experiments>
</comment>
<comment type="subcellular location">
    <subcellularLocation>
        <location evidence="6 7">Nucleus</location>
    </subcellularLocation>
    <text>Localized predominantly in the nucleus of haploid round spermatid.</text>
</comment>
<comment type="alternative products">
    <event type="alternative splicing"/>
    <isoform>
        <id>Q9JMB1-1</id>
        <name>1</name>
        <name>Theg major</name>
        <name>Theg 1a</name>
        <sequence type="displayed"/>
    </isoform>
    <isoform>
        <id>Q9JMB1-2</id>
        <name>2</name>
        <name>Theg minor</name>
        <name>Theg 1b</name>
        <sequence type="described" ref="VSP_028447"/>
    </isoform>
</comment>
<comment type="tissue specificity">
    <text evidence="4 5 6 7">Testis specific (at protein level). Specifically expressed in spermatids; Sertoli cells maintain the level of expression in spermatids. If isolated spermatids are cultivated for 16 hours alone, the expression of THEG is down-regulated. May require signals from Sertoli cells to initiate changes in its gene expression through spermatogenesis.</text>
</comment>
<comment type="developmental stage">
    <text evidence="7">Expression in testis detected after stage P20, when haploid germ cells appeared in testis.</text>
</comment>
<comment type="disruption phenotype">
    <text evidence="5 7">According to PubMed:10747865, mice lacking Theg (mutant kisimo) have virtually no spermatozoa in the lumina of seminiferous and epididymal tubules. Spermatids in the vicinity of the lumina of seminiferous tubules showed vacuolation and were occasionally phagocytosed by Sertoli cells. Elongated spermatids have abnormal or completely nonexistent flagella. No difference is seen between wild type and null mutants in the number of spermatogonia or spermatocytes. According to PubMed:12748127 null mutants appear phenotypically normal and were fertile. However, a minor but significant reduction in testes weight was observed. Morphological appearance of sperm was normal.</text>
</comment>
<comment type="miscellaneous">
    <text>'Kisimo' is a Japanese word for goddess of easy delivery.</text>
</comment>
<gene>
    <name evidence="2" type="primary">Spmap2</name>
    <name evidence="8 10 11" type="synonym">Theg</name>
</gene>
<sequence length="375" mass="42796">MGELGEHRASLLSNPIPEVKTLGELKQGQNNGNLDLESEPFGSHWLQGSKATTGRTSEEPEEEIPPEEMAGEELPETSNLDGPLQQDLEVEVVEMSHLSITERTPSVSTAKGRKKRSRRLLELAKPKTNWQCLRDRTGRCCKGYAWISPRKTNLQFCLYWPSVYWTERFIEDTTLTITVPVVSQRMEELSRPKRFYQEYYNNNRTTPIWSIPRSTLEYQASNRLKQLATPKVRNNIWSINMSEVSQVSRAAQMAVPTPRTLRLAKPRPPATLLEEWDPMPKPKPYVSDYNRLLQLATPKALSEKCVPDRSPQWEVLDVTKNAVASSRIISLAQPKIRKDLNEGYNPYYISPASLVAQASPRIYELATPKYITKKV</sequence>